<proteinExistence type="inferred from homology"/>
<dbReference type="EC" id="3.6.5.3" evidence="2"/>
<dbReference type="EMBL" id="CP000038">
    <property type="protein sequence ID" value="AAZ90658.1"/>
    <property type="molecule type" value="Genomic_DNA"/>
</dbReference>
<dbReference type="SMR" id="Q3YV04"/>
<dbReference type="KEGG" id="ssn:SSON_4153"/>
<dbReference type="HOGENOM" id="CLU_007265_0_2_6"/>
<dbReference type="Proteomes" id="UP000002529">
    <property type="component" value="Chromosome"/>
</dbReference>
<dbReference type="GO" id="GO:0005829">
    <property type="term" value="C:cytosol"/>
    <property type="evidence" value="ECO:0007669"/>
    <property type="project" value="TreeGrafter"/>
</dbReference>
<dbReference type="GO" id="GO:0005525">
    <property type="term" value="F:GTP binding"/>
    <property type="evidence" value="ECO:0007669"/>
    <property type="project" value="UniProtKB-UniRule"/>
</dbReference>
<dbReference type="GO" id="GO:0003924">
    <property type="term" value="F:GTPase activity"/>
    <property type="evidence" value="ECO:0007669"/>
    <property type="project" value="InterPro"/>
</dbReference>
<dbReference type="GO" id="GO:0097216">
    <property type="term" value="F:guanosine tetraphosphate binding"/>
    <property type="evidence" value="ECO:0007669"/>
    <property type="project" value="UniProtKB-ARBA"/>
</dbReference>
<dbReference type="GO" id="GO:0003746">
    <property type="term" value="F:translation elongation factor activity"/>
    <property type="evidence" value="ECO:0007669"/>
    <property type="project" value="UniProtKB-UniRule"/>
</dbReference>
<dbReference type="CDD" id="cd01884">
    <property type="entry name" value="EF_Tu"/>
    <property type="match status" value="1"/>
</dbReference>
<dbReference type="CDD" id="cd03697">
    <property type="entry name" value="EFTU_II"/>
    <property type="match status" value="1"/>
</dbReference>
<dbReference type="CDD" id="cd03707">
    <property type="entry name" value="EFTU_III"/>
    <property type="match status" value="1"/>
</dbReference>
<dbReference type="FunFam" id="2.40.30.10:FF:000001">
    <property type="entry name" value="Elongation factor Tu"/>
    <property type="match status" value="1"/>
</dbReference>
<dbReference type="FunFam" id="3.40.50.300:FF:000003">
    <property type="entry name" value="Elongation factor Tu"/>
    <property type="match status" value="1"/>
</dbReference>
<dbReference type="Gene3D" id="3.40.50.300">
    <property type="entry name" value="P-loop containing nucleotide triphosphate hydrolases"/>
    <property type="match status" value="1"/>
</dbReference>
<dbReference type="Gene3D" id="2.40.30.10">
    <property type="entry name" value="Translation factors"/>
    <property type="match status" value="2"/>
</dbReference>
<dbReference type="HAMAP" id="MF_00118_B">
    <property type="entry name" value="EF_Tu_B"/>
    <property type="match status" value="1"/>
</dbReference>
<dbReference type="InterPro" id="IPR041709">
    <property type="entry name" value="EF-Tu_GTP-bd"/>
</dbReference>
<dbReference type="InterPro" id="IPR050055">
    <property type="entry name" value="EF-Tu_GTPase"/>
</dbReference>
<dbReference type="InterPro" id="IPR004161">
    <property type="entry name" value="EFTu-like_2"/>
</dbReference>
<dbReference type="InterPro" id="IPR033720">
    <property type="entry name" value="EFTU_2"/>
</dbReference>
<dbReference type="InterPro" id="IPR031157">
    <property type="entry name" value="G_TR_CS"/>
</dbReference>
<dbReference type="InterPro" id="IPR027417">
    <property type="entry name" value="P-loop_NTPase"/>
</dbReference>
<dbReference type="InterPro" id="IPR005225">
    <property type="entry name" value="Small_GTP-bd"/>
</dbReference>
<dbReference type="InterPro" id="IPR000795">
    <property type="entry name" value="T_Tr_GTP-bd_dom"/>
</dbReference>
<dbReference type="InterPro" id="IPR009000">
    <property type="entry name" value="Transl_B-barrel_sf"/>
</dbReference>
<dbReference type="InterPro" id="IPR009001">
    <property type="entry name" value="Transl_elong_EF1A/Init_IF2_C"/>
</dbReference>
<dbReference type="InterPro" id="IPR004541">
    <property type="entry name" value="Transl_elong_EFTu/EF1A_bac/org"/>
</dbReference>
<dbReference type="InterPro" id="IPR004160">
    <property type="entry name" value="Transl_elong_EFTu/EF1A_C"/>
</dbReference>
<dbReference type="NCBIfam" id="TIGR00485">
    <property type="entry name" value="EF-Tu"/>
    <property type="match status" value="1"/>
</dbReference>
<dbReference type="NCBIfam" id="NF000766">
    <property type="entry name" value="PRK00049.1"/>
    <property type="match status" value="1"/>
</dbReference>
<dbReference type="NCBIfam" id="NF009372">
    <property type="entry name" value="PRK12735.1"/>
    <property type="match status" value="1"/>
</dbReference>
<dbReference type="NCBIfam" id="NF009373">
    <property type="entry name" value="PRK12736.1"/>
    <property type="match status" value="1"/>
</dbReference>
<dbReference type="NCBIfam" id="TIGR00231">
    <property type="entry name" value="small_GTP"/>
    <property type="match status" value="1"/>
</dbReference>
<dbReference type="PANTHER" id="PTHR43721:SF22">
    <property type="entry name" value="ELONGATION FACTOR TU, MITOCHONDRIAL"/>
    <property type="match status" value="1"/>
</dbReference>
<dbReference type="PANTHER" id="PTHR43721">
    <property type="entry name" value="ELONGATION FACTOR TU-RELATED"/>
    <property type="match status" value="1"/>
</dbReference>
<dbReference type="Pfam" id="PF00009">
    <property type="entry name" value="GTP_EFTU"/>
    <property type="match status" value="1"/>
</dbReference>
<dbReference type="Pfam" id="PF03144">
    <property type="entry name" value="GTP_EFTU_D2"/>
    <property type="match status" value="1"/>
</dbReference>
<dbReference type="Pfam" id="PF03143">
    <property type="entry name" value="GTP_EFTU_D3"/>
    <property type="match status" value="1"/>
</dbReference>
<dbReference type="PRINTS" id="PR00315">
    <property type="entry name" value="ELONGATNFCT"/>
</dbReference>
<dbReference type="SUPFAM" id="SSF50465">
    <property type="entry name" value="EF-Tu/eEF-1alpha/eIF2-gamma C-terminal domain"/>
    <property type="match status" value="1"/>
</dbReference>
<dbReference type="SUPFAM" id="SSF52540">
    <property type="entry name" value="P-loop containing nucleoside triphosphate hydrolases"/>
    <property type="match status" value="1"/>
</dbReference>
<dbReference type="SUPFAM" id="SSF50447">
    <property type="entry name" value="Translation proteins"/>
    <property type="match status" value="1"/>
</dbReference>
<dbReference type="PROSITE" id="PS00301">
    <property type="entry name" value="G_TR_1"/>
    <property type="match status" value="1"/>
</dbReference>
<dbReference type="PROSITE" id="PS51722">
    <property type="entry name" value="G_TR_2"/>
    <property type="match status" value="1"/>
</dbReference>
<accession>Q3YV04</accession>
<comment type="function">
    <text evidence="2">GTP hydrolase that promotes the GTP-dependent binding of aminoacyl-tRNA to the A-site of ribosomes during protein biosynthesis.</text>
</comment>
<comment type="catalytic activity">
    <reaction evidence="2">
        <text>GTP + H2O = GDP + phosphate + H(+)</text>
        <dbReference type="Rhea" id="RHEA:19669"/>
        <dbReference type="ChEBI" id="CHEBI:15377"/>
        <dbReference type="ChEBI" id="CHEBI:15378"/>
        <dbReference type="ChEBI" id="CHEBI:37565"/>
        <dbReference type="ChEBI" id="CHEBI:43474"/>
        <dbReference type="ChEBI" id="CHEBI:58189"/>
        <dbReference type="EC" id="3.6.5.3"/>
    </reaction>
    <physiologicalReaction direction="left-to-right" evidence="2">
        <dbReference type="Rhea" id="RHEA:19670"/>
    </physiologicalReaction>
</comment>
<comment type="subunit">
    <text evidence="2">Monomer.</text>
</comment>
<comment type="subcellular location">
    <subcellularLocation>
        <location evidence="2">Cytoplasm</location>
    </subcellularLocation>
</comment>
<comment type="similarity">
    <text evidence="2">Belongs to the TRAFAC class translation factor GTPase superfamily. Classic translation factor GTPase family. EF-Tu/EF-1A subfamily.</text>
</comment>
<feature type="chain" id="PRO_0000337543" description="Elongation factor Tu 2">
    <location>
        <begin position="1"/>
        <end position="394"/>
    </location>
</feature>
<feature type="domain" description="tr-type G">
    <location>
        <begin position="10"/>
        <end position="204"/>
    </location>
</feature>
<feature type="region of interest" description="G1" evidence="1">
    <location>
        <begin position="19"/>
        <end position="26"/>
    </location>
</feature>
<feature type="region of interest" description="G2" evidence="1">
    <location>
        <begin position="60"/>
        <end position="64"/>
    </location>
</feature>
<feature type="region of interest" description="G3" evidence="1">
    <location>
        <begin position="81"/>
        <end position="84"/>
    </location>
</feature>
<feature type="region of interest" description="G4" evidence="1">
    <location>
        <begin position="136"/>
        <end position="139"/>
    </location>
</feature>
<feature type="region of interest" description="G5" evidence="1">
    <location>
        <begin position="174"/>
        <end position="176"/>
    </location>
</feature>
<feature type="binding site" evidence="2">
    <location>
        <begin position="19"/>
        <end position="26"/>
    </location>
    <ligand>
        <name>GTP</name>
        <dbReference type="ChEBI" id="CHEBI:37565"/>
    </ligand>
</feature>
<feature type="binding site" evidence="2">
    <location>
        <position position="26"/>
    </location>
    <ligand>
        <name>Mg(2+)</name>
        <dbReference type="ChEBI" id="CHEBI:18420"/>
    </ligand>
</feature>
<feature type="binding site" evidence="2">
    <location>
        <begin position="81"/>
        <end position="85"/>
    </location>
    <ligand>
        <name>GTP</name>
        <dbReference type="ChEBI" id="CHEBI:37565"/>
    </ligand>
</feature>
<feature type="binding site" evidence="2">
    <location>
        <begin position="136"/>
        <end position="139"/>
    </location>
    <ligand>
        <name>GTP</name>
        <dbReference type="ChEBI" id="CHEBI:37565"/>
    </ligand>
</feature>
<reference key="1">
    <citation type="journal article" date="2005" name="Nucleic Acids Res.">
        <title>Genome dynamics and diversity of Shigella species, the etiologic agents of bacillary dysentery.</title>
        <authorList>
            <person name="Yang F."/>
            <person name="Yang J."/>
            <person name="Zhang X."/>
            <person name="Chen L."/>
            <person name="Jiang Y."/>
            <person name="Yan Y."/>
            <person name="Tang X."/>
            <person name="Wang J."/>
            <person name="Xiong Z."/>
            <person name="Dong J."/>
            <person name="Xue Y."/>
            <person name="Zhu Y."/>
            <person name="Xu X."/>
            <person name="Sun L."/>
            <person name="Chen S."/>
            <person name="Nie H."/>
            <person name="Peng J."/>
            <person name="Xu J."/>
            <person name="Wang Y."/>
            <person name="Yuan Z."/>
            <person name="Wen Y."/>
            <person name="Yao Z."/>
            <person name="Shen Y."/>
            <person name="Qiang B."/>
            <person name="Hou Y."/>
            <person name="Yu J."/>
            <person name="Jin Q."/>
        </authorList>
    </citation>
    <scope>NUCLEOTIDE SEQUENCE [LARGE SCALE GENOMIC DNA]</scope>
    <source>
        <strain>Ss046</strain>
    </source>
</reference>
<organism>
    <name type="scientific">Shigella sonnei (strain Ss046)</name>
    <dbReference type="NCBI Taxonomy" id="300269"/>
    <lineage>
        <taxon>Bacteria</taxon>
        <taxon>Pseudomonadati</taxon>
        <taxon>Pseudomonadota</taxon>
        <taxon>Gammaproteobacteria</taxon>
        <taxon>Enterobacterales</taxon>
        <taxon>Enterobacteriaceae</taxon>
        <taxon>Shigella</taxon>
    </lineage>
</organism>
<gene>
    <name evidence="2" type="primary">tuf2</name>
    <name type="synonym">tufB</name>
    <name type="ordered locus">SSON_4153</name>
</gene>
<evidence type="ECO:0000250" key="1"/>
<evidence type="ECO:0000255" key="2">
    <source>
        <dbReference type="HAMAP-Rule" id="MF_00118"/>
    </source>
</evidence>
<name>EFTU2_SHISS</name>
<sequence length="394" mass="43314">MSKEKFERTKPHVNVGTIGHVDHGKTTLTAAITTVLAKTYGGAARAFDQIDNAPEEKARGITINTSHVEYDTPTRHYAHVDCPGHADYVKNMITGAAQMDGAILVVAATDGPMPQTREHILLGRQVGVPYIIVFLNKCDMVDDEELLELVEMEVRELLSQYDFPGDDTPIVRGSALKALEGDAEWEAKILELAGFLDSYIPEPERAIDKPFLLPIEDVFSISGRGTVVTGRVERGIIKVGEEVEIVGIKETQKSTCTGVEMFRKLLDEGRAGENVGVLLRGIKREEIERGQVLAKPGTIKPHTKFESEVYILSKDEGGRHTPFFKGYRPQFYFRTTDVTGTIELPEGVEMVMPGDNIKMVVTLIHPIAMDDGLRFAIREGGRTVGAGVVAKVLS</sequence>
<keyword id="KW-0963">Cytoplasm</keyword>
<keyword id="KW-0251">Elongation factor</keyword>
<keyword id="KW-0342">GTP-binding</keyword>
<keyword id="KW-0378">Hydrolase</keyword>
<keyword id="KW-0460">Magnesium</keyword>
<keyword id="KW-0479">Metal-binding</keyword>
<keyword id="KW-0547">Nucleotide-binding</keyword>
<keyword id="KW-0648">Protein biosynthesis</keyword>
<keyword id="KW-1185">Reference proteome</keyword>
<protein>
    <recommendedName>
        <fullName evidence="2">Elongation factor Tu 2</fullName>
        <shortName evidence="2">EF-Tu 2</shortName>
        <ecNumber evidence="2">3.6.5.3</ecNumber>
    </recommendedName>
</protein>